<reference key="1">
    <citation type="journal article" date="2011" name="J. Bacteriol.">
        <title>Genome sequence of lineage III Listeria monocytogenes strain HCC23.</title>
        <authorList>
            <person name="Steele C.L."/>
            <person name="Donaldson J.R."/>
            <person name="Paul D."/>
            <person name="Banes M.M."/>
            <person name="Arick T."/>
            <person name="Bridges S.M."/>
            <person name="Lawrence M.L."/>
        </authorList>
    </citation>
    <scope>NUCLEOTIDE SEQUENCE [LARGE SCALE GENOMIC DNA]</scope>
    <source>
        <strain>HCC23</strain>
    </source>
</reference>
<dbReference type="EC" id="4.3.3.6" evidence="1"/>
<dbReference type="EC" id="3.5.1.2" evidence="1"/>
<dbReference type="EMBL" id="CP001175">
    <property type="protein sequence ID" value="ACK38804.1"/>
    <property type="molecule type" value="Genomic_DNA"/>
</dbReference>
<dbReference type="RefSeq" id="WP_012580950.1">
    <property type="nucleotide sequence ID" value="NC_011660.1"/>
</dbReference>
<dbReference type="SMR" id="B8DH16"/>
<dbReference type="MEROPS" id="C26.A32"/>
<dbReference type="KEGG" id="lmh:LMHCC_0447"/>
<dbReference type="HOGENOM" id="CLU_069674_2_0_9"/>
<dbReference type="UniPathway" id="UPA00245"/>
<dbReference type="GO" id="GO:0005829">
    <property type="term" value="C:cytosol"/>
    <property type="evidence" value="ECO:0007669"/>
    <property type="project" value="TreeGrafter"/>
</dbReference>
<dbReference type="GO" id="GO:1903600">
    <property type="term" value="C:glutaminase complex"/>
    <property type="evidence" value="ECO:0007669"/>
    <property type="project" value="TreeGrafter"/>
</dbReference>
<dbReference type="GO" id="GO:0004359">
    <property type="term" value="F:glutaminase activity"/>
    <property type="evidence" value="ECO:0007669"/>
    <property type="project" value="UniProtKB-UniRule"/>
</dbReference>
<dbReference type="GO" id="GO:0036381">
    <property type="term" value="F:pyridoxal 5'-phosphate synthase (glutamine hydrolysing) activity"/>
    <property type="evidence" value="ECO:0007669"/>
    <property type="project" value="UniProtKB-UniRule"/>
</dbReference>
<dbReference type="GO" id="GO:0006543">
    <property type="term" value="P:glutamine catabolic process"/>
    <property type="evidence" value="ECO:0007669"/>
    <property type="project" value="UniProtKB-UniRule"/>
</dbReference>
<dbReference type="GO" id="GO:0042823">
    <property type="term" value="P:pyridoxal phosphate biosynthetic process"/>
    <property type="evidence" value="ECO:0007669"/>
    <property type="project" value="UniProtKB-UniRule"/>
</dbReference>
<dbReference type="GO" id="GO:0008614">
    <property type="term" value="P:pyridoxine metabolic process"/>
    <property type="evidence" value="ECO:0007669"/>
    <property type="project" value="TreeGrafter"/>
</dbReference>
<dbReference type="CDD" id="cd01749">
    <property type="entry name" value="GATase1_PB"/>
    <property type="match status" value="1"/>
</dbReference>
<dbReference type="FunFam" id="3.40.50.880:FF:000010">
    <property type="entry name" value="uncharacterized protein LOC100176842 isoform X2"/>
    <property type="match status" value="1"/>
</dbReference>
<dbReference type="Gene3D" id="3.40.50.880">
    <property type="match status" value="1"/>
</dbReference>
<dbReference type="HAMAP" id="MF_01615">
    <property type="entry name" value="PdxT"/>
    <property type="match status" value="1"/>
</dbReference>
<dbReference type="InterPro" id="IPR029062">
    <property type="entry name" value="Class_I_gatase-like"/>
</dbReference>
<dbReference type="InterPro" id="IPR002161">
    <property type="entry name" value="PdxT/SNO"/>
</dbReference>
<dbReference type="InterPro" id="IPR021196">
    <property type="entry name" value="PdxT/SNO_CS"/>
</dbReference>
<dbReference type="NCBIfam" id="TIGR03800">
    <property type="entry name" value="PLP_synth_Pdx2"/>
    <property type="match status" value="1"/>
</dbReference>
<dbReference type="PANTHER" id="PTHR31559">
    <property type="entry name" value="PYRIDOXAL 5'-PHOSPHATE SYNTHASE SUBUNIT SNO"/>
    <property type="match status" value="1"/>
</dbReference>
<dbReference type="PANTHER" id="PTHR31559:SF0">
    <property type="entry name" value="PYRIDOXAL 5'-PHOSPHATE SYNTHASE SUBUNIT SNO1-RELATED"/>
    <property type="match status" value="1"/>
</dbReference>
<dbReference type="Pfam" id="PF01174">
    <property type="entry name" value="SNO"/>
    <property type="match status" value="1"/>
</dbReference>
<dbReference type="PIRSF" id="PIRSF005639">
    <property type="entry name" value="Glut_amidoT_SNO"/>
    <property type="match status" value="1"/>
</dbReference>
<dbReference type="SUPFAM" id="SSF52317">
    <property type="entry name" value="Class I glutamine amidotransferase-like"/>
    <property type="match status" value="1"/>
</dbReference>
<dbReference type="PROSITE" id="PS01236">
    <property type="entry name" value="PDXT_SNO_1"/>
    <property type="match status" value="1"/>
</dbReference>
<dbReference type="PROSITE" id="PS51130">
    <property type="entry name" value="PDXT_SNO_2"/>
    <property type="match status" value="1"/>
</dbReference>
<name>PDXT_LISMH</name>
<accession>B8DH16</accession>
<keyword id="KW-0315">Glutamine amidotransferase</keyword>
<keyword id="KW-0378">Hydrolase</keyword>
<keyword id="KW-0456">Lyase</keyword>
<keyword id="KW-0663">Pyridoxal phosphate</keyword>
<comment type="function">
    <text evidence="1">Catalyzes the hydrolysis of glutamine to glutamate and ammonia as part of the biosynthesis of pyridoxal 5'-phosphate. The resulting ammonia molecule is channeled to the active site of PdxS.</text>
</comment>
<comment type="catalytic activity">
    <reaction evidence="1">
        <text>aldehydo-D-ribose 5-phosphate + D-glyceraldehyde 3-phosphate + L-glutamine = pyridoxal 5'-phosphate + L-glutamate + phosphate + 3 H2O + H(+)</text>
        <dbReference type="Rhea" id="RHEA:31507"/>
        <dbReference type="ChEBI" id="CHEBI:15377"/>
        <dbReference type="ChEBI" id="CHEBI:15378"/>
        <dbReference type="ChEBI" id="CHEBI:29985"/>
        <dbReference type="ChEBI" id="CHEBI:43474"/>
        <dbReference type="ChEBI" id="CHEBI:58273"/>
        <dbReference type="ChEBI" id="CHEBI:58359"/>
        <dbReference type="ChEBI" id="CHEBI:59776"/>
        <dbReference type="ChEBI" id="CHEBI:597326"/>
        <dbReference type="EC" id="4.3.3.6"/>
    </reaction>
</comment>
<comment type="catalytic activity">
    <reaction evidence="1">
        <text>L-glutamine + H2O = L-glutamate + NH4(+)</text>
        <dbReference type="Rhea" id="RHEA:15889"/>
        <dbReference type="ChEBI" id="CHEBI:15377"/>
        <dbReference type="ChEBI" id="CHEBI:28938"/>
        <dbReference type="ChEBI" id="CHEBI:29985"/>
        <dbReference type="ChEBI" id="CHEBI:58359"/>
        <dbReference type="EC" id="3.5.1.2"/>
    </reaction>
</comment>
<comment type="pathway">
    <text evidence="1">Cofactor biosynthesis; pyridoxal 5'-phosphate biosynthesis.</text>
</comment>
<comment type="subunit">
    <text evidence="1">In the presence of PdxS, forms a dodecamer of heterodimers. Only shows activity in the heterodimer.</text>
</comment>
<comment type="similarity">
    <text evidence="1">Belongs to the glutaminase PdxT/SNO family.</text>
</comment>
<gene>
    <name evidence="1" type="primary">pdxT</name>
    <name type="ordered locus">LMHCC_0447</name>
</gene>
<sequence length="188" mass="20529">MKKIGVLAIQGAVDEHIQMIESAGALAFKVKHSNDLAGLDGLVLPGGESTTMRKIMKRYDLMEPVKAFAKEGKAIFGTCAGLVLLSKEIEGGEESLGLLDATAIRNGFGRQKESFEAELSVDVFDAPTFEAIFIRAPYLIEPSDEVTVLATIDGKIVAAKQANILVTAFHPELTNDNRWMRYFLEKIL</sequence>
<feature type="chain" id="PRO_1000185893" description="Pyridoxal 5'-phosphate synthase subunit PdxT">
    <location>
        <begin position="1"/>
        <end position="188"/>
    </location>
</feature>
<feature type="active site" description="Nucleophile" evidence="1">
    <location>
        <position position="79"/>
    </location>
</feature>
<feature type="active site" description="Charge relay system" evidence="1">
    <location>
        <position position="170"/>
    </location>
</feature>
<feature type="active site" description="Charge relay system" evidence="1">
    <location>
        <position position="172"/>
    </location>
</feature>
<feature type="binding site" evidence="1">
    <location>
        <begin position="47"/>
        <end position="49"/>
    </location>
    <ligand>
        <name>L-glutamine</name>
        <dbReference type="ChEBI" id="CHEBI:58359"/>
    </ligand>
</feature>
<feature type="binding site" evidence="1">
    <location>
        <position position="105"/>
    </location>
    <ligand>
        <name>L-glutamine</name>
        <dbReference type="ChEBI" id="CHEBI:58359"/>
    </ligand>
</feature>
<feature type="binding site" evidence="1">
    <location>
        <begin position="134"/>
        <end position="135"/>
    </location>
    <ligand>
        <name>L-glutamine</name>
        <dbReference type="ChEBI" id="CHEBI:58359"/>
    </ligand>
</feature>
<proteinExistence type="inferred from homology"/>
<organism>
    <name type="scientific">Listeria monocytogenes serotype 4a (strain HCC23)</name>
    <dbReference type="NCBI Taxonomy" id="552536"/>
    <lineage>
        <taxon>Bacteria</taxon>
        <taxon>Bacillati</taxon>
        <taxon>Bacillota</taxon>
        <taxon>Bacilli</taxon>
        <taxon>Bacillales</taxon>
        <taxon>Listeriaceae</taxon>
        <taxon>Listeria</taxon>
    </lineage>
</organism>
<evidence type="ECO:0000255" key="1">
    <source>
        <dbReference type="HAMAP-Rule" id="MF_01615"/>
    </source>
</evidence>
<protein>
    <recommendedName>
        <fullName evidence="1">Pyridoxal 5'-phosphate synthase subunit PdxT</fullName>
        <ecNumber evidence="1">4.3.3.6</ecNumber>
    </recommendedName>
    <alternativeName>
        <fullName evidence="1">Pdx2</fullName>
    </alternativeName>
    <alternativeName>
        <fullName evidence="1">Pyridoxal 5'-phosphate synthase glutaminase subunit</fullName>
        <ecNumber evidence="1">3.5.1.2</ecNumber>
    </alternativeName>
</protein>